<geneLocation type="chloroplast"/>
<protein>
    <recommendedName>
        <fullName evidence="1">Potassium/proton antiporter CemA</fullName>
    </recommendedName>
    <alternativeName>
        <fullName evidence="1">Chloroplast envelope membrane protein A</fullName>
        <shortName evidence="1">CemA</shortName>
    </alternativeName>
</protein>
<keyword id="KW-0050">Antiport</keyword>
<keyword id="KW-0150">Chloroplast</keyword>
<keyword id="KW-0375">Hydrogen ion transport</keyword>
<keyword id="KW-0406">Ion transport</keyword>
<keyword id="KW-0472">Membrane</keyword>
<keyword id="KW-0934">Plastid</keyword>
<keyword id="KW-1001">Plastid inner membrane</keyword>
<keyword id="KW-0630">Potassium</keyword>
<keyword id="KW-0633">Potassium transport</keyword>
<keyword id="KW-0812">Transmembrane</keyword>
<keyword id="KW-1133">Transmembrane helix</keyword>
<keyword id="KW-0813">Transport</keyword>
<accession>A4QKU3</accession>
<evidence type="ECO:0000255" key="1">
    <source>
        <dbReference type="HAMAP-Rule" id="MF_01308"/>
    </source>
</evidence>
<evidence type="ECO:0000305" key="2"/>
<sequence>MAKKKAFIPFFYFTSIVFLPWLISLCCNKSLKTWITNWWNTRQCETFLNDIQEKSVLEKFIQLEDLFQLDEMIKEYPETDLQQFRLGIHKETIQFIKIHNEYRIHTILHFSTNLISFVILSGYSFWAKEKLFILNSWVQEFLYNLSDTIKAFSILLVTDLCIGFHSPHGWELMIGYIYKDFGFAHYEQILSGLVSTFPVILDTIFKYWIFRYLNRVSPSLVVIYHAIND</sequence>
<gene>
    <name evidence="1" type="primary">cemA</name>
    <name type="synonym">ycf10</name>
</gene>
<organism>
    <name type="scientific">Crucihimalaya wallichii</name>
    <name type="common">Rock-cress</name>
    <name type="synonym">Arabidopsis campestris</name>
    <dbReference type="NCBI Taxonomy" id="78192"/>
    <lineage>
        <taxon>Eukaryota</taxon>
        <taxon>Viridiplantae</taxon>
        <taxon>Streptophyta</taxon>
        <taxon>Embryophyta</taxon>
        <taxon>Tracheophyta</taxon>
        <taxon>Spermatophyta</taxon>
        <taxon>Magnoliopsida</taxon>
        <taxon>eudicotyledons</taxon>
        <taxon>Gunneridae</taxon>
        <taxon>Pentapetalae</taxon>
        <taxon>rosids</taxon>
        <taxon>malvids</taxon>
        <taxon>Brassicales</taxon>
        <taxon>Brassicaceae</taxon>
        <taxon>Crucihimalayeae</taxon>
        <taxon>Crucihimalaya</taxon>
    </lineage>
</organism>
<proteinExistence type="inferred from homology"/>
<name>CEMA_CRUWA</name>
<reference key="1">
    <citation type="submission" date="2007-03" db="EMBL/GenBank/DDBJ databases">
        <title>Sequencing analysis of Crucihimalaya wallichii chloroplast DNA.</title>
        <authorList>
            <person name="Hosouchi T."/>
            <person name="Tsuruoka H."/>
            <person name="Kotani H."/>
        </authorList>
    </citation>
    <scope>NUCLEOTIDE SEQUENCE [LARGE SCALE GENOMIC DNA]</scope>
</reference>
<dbReference type="EMBL" id="AP009372">
    <property type="protein sequence ID" value="BAF50298.1"/>
    <property type="molecule type" value="Genomic_DNA"/>
</dbReference>
<dbReference type="RefSeq" id="YP_001123474.1">
    <property type="nucleotide sequence ID" value="NC_009271.1"/>
</dbReference>
<dbReference type="SMR" id="A4QKU3"/>
<dbReference type="GeneID" id="4962686"/>
<dbReference type="GO" id="GO:0009706">
    <property type="term" value="C:chloroplast inner membrane"/>
    <property type="evidence" value="ECO:0007669"/>
    <property type="project" value="UniProtKB-SubCell"/>
</dbReference>
<dbReference type="GO" id="GO:0015297">
    <property type="term" value="F:antiporter activity"/>
    <property type="evidence" value="ECO:0007669"/>
    <property type="project" value="UniProtKB-KW"/>
</dbReference>
<dbReference type="GO" id="GO:0015078">
    <property type="term" value="F:proton transmembrane transporter activity"/>
    <property type="evidence" value="ECO:0007669"/>
    <property type="project" value="UniProtKB-UniRule"/>
</dbReference>
<dbReference type="GO" id="GO:0006813">
    <property type="term" value="P:potassium ion transport"/>
    <property type="evidence" value="ECO:0007669"/>
    <property type="project" value="UniProtKB-UniRule"/>
</dbReference>
<dbReference type="HAMAP" id="MF_01308">
    <property type="entry name" value="CemA_PxcA"/>
    <property type="match status" value="1"/>
</dbReference>
<dbReference type="InterPro" id="IPR004282">
    <property type="entry name" value="CemA"/>
</dbReference>
<dbReference type="PANTHER" id="PTHR33650:SF2">
    <property type="entry name" value="CHLOROPLAST ENVELOPE MEMBRANE PROTEIN"/>
    <property type="match status" value="1"/>
</dbReference>
<dbReference type="PANTHER" id="PTHR33650">
    <property type="entry name" value="CHLOROPLAST ENVELOPE MEMBRANE PROTEIN-RELATED"/>
    <property type="match status" value="1"/>
</dbReference>
<dbReference type="Pfam" id="PF03040">
    <property type="entry name" value="CemA"/>
    <property type="match status" value="1"/>
</dbReference>
<comment type="function">
    <text evidence="1">Contributes to K(+)/H(+) antiport activity by supporting proton efflux to control proton extrusion and homeostasis in chloroplasts in a light-dependent manner to modulate photosynthesis. Prevents excessive induction of non-photochemical quenching (NPQ) under continuous-light conditions. Indirectly promotes efficient inorganic carbon uptake into chloroplasts.</text>
</comment>
<comment type="catalytic activity">
    <reaction evidence="1">
        <text>K(+)(in) + H(+)(out) = K(+)(out) + H(+)(in)</text>
        <dbReference type="Rhea" id="RHEA:29467"/>
        <dbReference type="ChEBI" id="CHEBI:15378"/>
        <dbReference type="ChEBI" id="CHEBI:29103"/>
    </reaction>
</comment>
<comment type="subcellular location">
    <subcellularLocation>
        <location evidence="1">Plastid</location>
        <location evidence="1">Chloroplast inner membrane</location>
        <topology evidence="1">Multi-pass membrane protein</topology>
    </subcellularLocation>
</comment>
<comment type="similarity">
    <text evidence="1 2">Belongs to the CemA family.</text>
</comment>
<feature type="chain" id="PRO_0000293515" description="Potassium/proton antiporter CemA">
    <location>
        <begin position="1"/>
        <end position="229"/>
    </location>
</feature>
<feature type="transmembrane region" description="Helical" evidence="1">
    <location>
        <begin position="6"/>
        <end position="26"/>
    </location>
</feature>
<feature type="transmembrane region" description="Helical" evidence="1">
    <location>
        <begin position="107"/>
        <end position="127"/>
    </location>
</feature>
<feature type="transmembrane region" description="Helical" evidence="1">
    <location>
        <begin position="189"/>
        <end position="209"/>
    </location>
</feature>